<keyword id="KW-0687">Ribonucleoprotein</keyword>
<keyword id="KW-0689">Ribosomal protein</keyword>
<feature type="chain" id="PRO_1000079843" description="Large ribosomal subunit protein bL28">
    <location>
        <begin position="1"/>
        <end position="63"/>
    </location>
</feature>
<comment type="similarity">
    <text evidence="1">Belongs to the bacterial ribosomal protein bL28 family.</text>
</comment>
<name>RL28_CLOB8</name>
<reference key="1">
    <citation type="submission" date="2007-06" db="EMBL/GenBank/DDBJ databases">
        <title>Complete sequence of Clostridium beijerinckii NCIMB 8052.</title>
        <authorList>
            <consortium name="US DOE Joint Genome Institute"/>
            <person name="Copeland A."/>
            <person name="Lucas S."/>
            <person name="Lapidus A."/>
            <person name="Barry K."/>
            <person name="Detter J.C."/>
            <person name="Glavina del Rio T."/>
            <person name="Hammon N."/>
            <person name="Israni S."/>
            <person name="Dalin E."/>
            <person name="Tice H."/>
            <person name="Pitluck S."/>
            <person name="Sims D."/>
            <person name="Brettin T."/>
            <person name="Bruce D."/>
            <person name="Tapia R."/>
            <person name="Brainard J."/>
            <person name="Schmutz J."/>
            <person name="Larimer F."/>
            <person name="Land M."/>
            <person name="Hauser L."/>
            <person name="Kyrpides N."/>
            <person name="Mikhailova N."/>
            <person name="Bennet G."/>
            <person name="Cann I."/>
            <person name="Chen J.-S."/>
            <person name="Contreras A.L."/>
            <person name="Jones D."/>
            <person name="Kashket E."/>
            <person name="Mitchell W."/>
            <person name="Stoddard S."/>
            <person name="Schwarz W."/>
            <person name="Qureshi N."/>
            <person name="Young M."/>
            <person name="Shi Z."/>
            <person name="Ezeji T."/>
            <person name="White B."/>
            <person name="Blaschek H."/>
            <person name="Richardson P."/>
        </authorList>
    </citation>
    <scope>NUCLEOTIDE SEQUENCE [LARGE SCALE GENOMIC DNA]</scope>
    <source>
        <strain>ATCC 51743 / NCIMB 8052</strain>
    </source>
</reference>
<evidence type="ECO:0000255" key="1">
    <source>
        <dbReference type="HAMAP-Rule" id="MF_00373"/>
    </source>
</evidence>
<evidence type="ECO:0000305" key="2"/>
<protein>
    <recommendedName>
        <fullName evidence="1">Large ribosomal subunit protein bL28</fullName>
    </recommendedName>
    <alternativeName>
        <fullName evidence="2">50S ribosomal protein L28</fullName>
    </alternativeName>
</protein>
<organism>
    <name type="scientific">Clostridium beijerinckii (strain ATCC 51743 / NCIMB 8052)</name>
    <name type="common">Clostridium acetobutylicum</name>
    <dbReference type="NCBI Taxonomy" id="290402"/>
    <lineage>
        <taxon>Bacteria</taxon>
        <taxon>Bacillati</taxon>
        <taxon>Bacillota</taxon>
        <taxon>Clostridia</taxon>
        <taxon>Eubacteriales</taxon>
        <taxon>Clostridiaceae</taxon>
        <taxon>Clostridium</taxon>
    </lineage>
</organism>
<dbReference type="EMBL" id="CP000721">
    <property type="protein sequence ID" value="ABR33337.1"/>
    <property type="molecule type" value="Genomic_DNA"/>
</dbReference>
<dbReference type="RefSeq" id="WP_008424849.1">
    <property type="nucleotide sequence ID" value="NC_009617.1"/>
</dbReference>
<dbReference type="SMR" id="A6LSK7"/>
<dbReference type="GeneID" id="66344143"/>
<dbReference type="KEGG" id="cbe:Cbei_1155"/>
<dbReference type="eggNOG" id="COG0227">
    <property type="taxonomic scope" value="Bacteria"/>
</dbReference>
<dbReference type="HOGENOM" id="CLU_064548_7_0_9"/>
<dbReference type="Proteomes" id="UP000000565">
    <property type="component" value="Chromosome"/>
</dbReference>
<dbReference type="GO" id="GO:1990904">
    <property type="term" value="C:ribonucleoprotein complex"/>
    <property type="evidence" value="ECO:0007669"/>
    <property type="project" value="UniProtKB-KW"/>
</dbReference>
<dbReference type="GO" id="GO:0005840">
    <property type="term" value="C:ribosome"/>
    <property type="evidence" value="ECO:0007669"/>
    <property type="project" value="UniProtKB-KW"/>
</dbReference>
<dbReference type="GO" id="GO:0003735">
    <property type="term" value="F:structural constituent of ribosome"/>
    <property type="evidence" value="ECO:0007669"/>
    <property type="project" value="InterPro"/>
</dbReference>
<dbReference type="GO" id="GO:0006412">
    <property type="term" value="P:translation"/>
    <property type="evidence" value="ECO:0007669"/>
    <property type="project" value="UniProtKB-UniRule"/>
</dbReference>
<dbReference type="Gene3D" id="2.30.170.40">
    <property type="entry name" value="Ribosomal protein L28/L24"/>
    <property type="match status" value="1"/>
</dbReference>
<dbReference type="HAMAP" id="MF_00373">
    <property type="entry name" value="Ribosomal_bL28"/>
    <property type="match status" value="1"/>
</dbReference>
<dbReference type="InterPro" id="IPR050096">
    <property type="entry name" value="Bacterial_rp_bL28"/>
</dbReference>
<dbReference type="InterPro" id="IPR026569">
    <property type="entry name" value="Ribosomal_bL28"/>
</dbReference>
<dbReference type="InterPro" id="IPR034704">
    <property type="entry name" value="Ribosomal_bL28/bL31-like_sf"/>
</dbReference>
<dbReference type="InterPro" id="IPR001383">
    <property type="entry name" value="Ribosomal_bL28_bact-type"/>
</dbReference>
<dbReference type="InterPro" id="IPR037147">
    <property type="entry name" value="Ribosomal_bL28_sf"/>
</dbReference>
<dbReference type="NCBIfam" id="TIGR00009">
    <property type="entry name" value="L28"/>
    <property type="match status" value="1"/>
</dbReference>
<dbReference type="PANTHER" id="PTHR39080">
    <property type="entry name" value="50S RIBOSOMAL PROTEIN L28"/>
    <property type="match status" value="1"/>
</dbReference>
<dbReference type="PANTHER" id="PTHR39080:SF1">
    <property type="entry name" value="LARGE RIBOSOMAL SUBUNIT PROTEIN BL28A"/>
    <property type="match status" value="1"/>
</dbReference>
<dbReference type="Pfam" id="PF00830">
    <property type="entry name" value="Ribosomal_L28"/>
    <property type="match status" value="1"/>
</dbReference>
<dbReference type="SUPFAM" id="SSF143800">
    <property type="entry name" value="L28p-like"/>
    <property type="match status" value="1"/>
</dbReference>
<gene>
    <name evidence="1" type="primary">rpmB</name>
    <name type="ordered locus">Cbei_1155</name>
</gene>
<sequence>MARRCEICDKGVVAGVSYSHSHRQSKRTWAPNIKKVKALVNGTPKTVHVCTRCLRSGKVQRAI</sequence>
<accession>A6LSK7</accession>
<proteinExistence type="inferred from homology"/>